<keyword id="KW-1185">Reference proteome</keyword>
<dbReference type="EMBL" id="U00089">
    <property type="protein sequence ID" value="AAB95693.1"/>
    <property type="molecule type" value="Genomic_DNA"/>
</dbReference>
<dbReference type="PIR" id="S73371">
    <property type="entry name" value="S73371"/>
</dbReference>
<dbReference type="RefSeq" id="NP_109797.1">
    <property type="nucleotide sequence ID" value="NC_000912.1"/>
</dbReference>
<dbReference type="RefSeq" id="WP_010874466.1">
    <property type="nucleotide sequence ID" value="NZ_OU342337.1"/>
</dbReference>
<dbReference type="SMR" id="P75453"/>
<dbReference type="STRING" id="272634.MPN_109"/>
<dbReference type="EnsemblBacteria" id="AAB95693">
    <property type="protein sequence ID" value="AAB95693"/>
    <property type="gene ID" value="MPN_109"/>
</dbReference>
<dbReference type="KEGG" id="mpn:MPN_109"/>
<dbReference type="PATRIC" id="fig|272634.6.peg.115"/>
<dbReference type="HOGENOM" id="CLU_1609014_0_0_14"/>
<dbReference type="BioCyc" id="MPNE272634:G1GJ3-186-MONOMER"/>
<dbReference type="Proteomes" id="UP000000808">
    <property type="component" value="Chromosome"/>
</dbReference>
<gene>
    <name type="ordered locus">MPN_109</name>
    <name type="ORF">C09_orf165</name>
    <name type="ORF">MP045</name>
</gene>
<reference key="1">
    <citation type="journal article" date="1996" name="Nucleic Acids Res.">
        <title>Complete sequence analysis of the genome of the bacterium Mycoplasma pneumoniae.</title>
        <authorList>
            <person name="Himmelreich R."/>
            <person name="Hilbert H."/>
            <person name="Plagens H."/>
            <person name="Pirkl E."/>
            <person name="Li B.-C."/>
            <person name="Herrmann R."/>
        </authorList>
    </citation>
    <scope>NUCLEOTIDE SEQUENCE [LARGE SCALE GENOMIC DNA]</scope>
    <source>
        <strain>ATCC 29342 / M129 / Subtype 1</strain>
    </source>
</reference>
<reference key="2">
    <citation type="journal article" date="2000" name="Electrophoresis">
        <title>Towards a two-dimensional proteome map of Mycoplasma pneumoniae.</title>
        <authorList>
            <person name="Regula J.T."/>
            <person name="Ueberle B."/>
            <person name="Boguth G."/>
            <person name="Goerg A."/>
            <person name="Schnoelzer M."/>
            <person name="Herrmann R."/>
            <person name="Frank R."/>
        </authorList>
    </citation>
    <scope>IDENTIFICATION BY MASS SPECTROMETRY</scope>
    <source>
        <strain>ATCC 29342 / M129 / Subtype 1</strain>
    </source>
</reference>
<reference key="3">
    <citation type="journal article" date="2003" name="Nucleic Acids Res.">
        <title>A nomenclature for restriction enzymes, DNA methyltransferases, homing endonucleases and their genes.</title>
        <authorList>
            <person name="Roberts R.J."/>
            <person name="Belfort M."/>
            <person name="Bestor T."/>
            <person name="Bhagwat A.S."/>
            <person name="Bickle T.A."/>
            <person name="Bitinaite J."/>
            <person name="Blumenthal R.M."/>
            <person name="Degtyarev S.K."/>
            <person name="Dryden D.T."/>
            <person name="Dybvig K."/>
            <person name="Firman K."/>
            <person name="Gromova E.S."/>
            <person name="Gumport R.I."/>
            <person name="Halford S.E."/>
            <person name="Hattman S."/>
            <person name="Heitman J."/>
            <person name="Hornby D.P."/>
            <person name="Janulaitis A."/>
            <person name="Jeltsch A."/>
            <person name="Josephsen J."/>
            <person name="Kiss A."/>
            <person name="Klaenhammer T.R."/>
            <person name="Kobayashi I."/>
            <person name="Kong H."/>
            <person name="Krueger D.H."/>
            <person name="Lacks S."/>
            <person name="Marinus M.G."/>
            <person name="Miyahara M."/>
            <person name="Morgan R.D."/>
            <person name="Murray N.E."/>
            <person name="Nagaraja V."/>
            <person name="Piekarowicz A."/>
            <person name="Pingoud A."/>
            <person name="Raleigh E."/>
            <person name="Rao D.N."/>
            <person name="Reich N."/>
            <person name="Repin V.E."/>
            <person name="Selker E.U."/>
            <person name="Shaw P.C."/>
            <person name="Stein D.C."/>
            <person name="Stoddard B.L."/>
            <person name="Szybalski W."/>
            <person name="Trautner T.A."/>
            <person name="Van Etten J.L."/>
            <person name="Vitor J.M."/>
            <person name="Wilson G.G."/>
            <person name="Xu S.Y."/>
        </authorList>
    </citation>
    <scope>NOMENCLATURE</scope>
</reference>
<reference key="4">
    <citation type="journal article" date="2013" name="PLoS Genet.">
        <title>Comprehensive methylome characterization of Mycoplasma genitalium and Mycoplasma pneumoniae at single-base resolution.</title>
        <authorList>
            <person name="Lluch-Senar M."/>
            <person name="Luong K."/>
            <person name="Llorens-Rico V."/>
            <person name="Delgado J."/>
            <person name="Fang G."/>
            <person name="Spittle K."/>
            <person name="Clark T.A."/>
            <person name="Schadt E."/>
            <person name="Turner S.W."/>
            <person name="Korlach J."/>
            <person name="Serrano L."/>
        </authorList>
    </citation>
    <scope>IDENTIFICATION BY MASS SPECTROMETRY</scope>
    <scope>INDUCTION</scope>
    <scope>DISCUSSION OF SEQUENCE</scope>
    <source>
        <strain>ATCC 29342 / M129 / Subtype 1</strain>
    </source>
</reference>
<organism>
    <name type="scientific">Mycoplasma pneumoniae (strain ATCC 29342 / M129 / Subtype 1)</name>
    <name type="common">Mycoplasmoides pneumoniae</name>
    <dbReference type="NCBI Taxonomy" id="272634"/>
    <lineage>
        <taxon>Bacteria</taxon>
        <taxon>Bacillati</taxon>
        <taxon>Mycoplasmatota</taxon>
        <taxon>Mycoplasmoidales</taxon>
        <taxon>Mycoplasmoidaceae</taxon>
        <taxon>Mycoplasmoides</taxon>
    </lineage>
</organism>
<feature type="chain" id="PRO_0000210647" description="Putative type II restriction enzyme and methyltransferase RM.MpnORF109P N-terminus">
    <location>
        <begin position="1"/>
        <end position="165"/>
    </location>
</feature>
<evidence type="ECO:0000269" key="1">
    <source>
    </source>
</evidence>
<evidence type="ECO:0000303" key="2">
    <source>
    </source>
</evidence>
<comment type="function">
    <text evidence="2">Corresponds to the N-terminus of a putative G subtype type II restriction/methylase subunit.</text>
</comment>
<comment type="induction">
    <text evidence="1">Detected after 6 and 96 hours growth, there is no change in protein levels (at protein level).</text>
</comment>
<sequence length="165" mass="19820">MKFKLNFHEKINQKDCWQSLIDHKERSYSLDFVNNTEKELPLIYGYEVKDFENHGVKIGYTTCKPSDKIQSAIEERILSQEKEFRFLDENIEKIEEVKVIFWAIAINEKDESFKDYSLHSFIKEKNLLKESQAGGEWFIVDENKDKFEYLSQIFRQFRAPSLFKK</sequence>
<protein>
    <recommendedName>
        <fullName evidence="2">Putative type II restriction enzyme and methyltransferase RM.MpnORF109P N-terminus</fullName>
    </recommendedName>
</protein>
<accession>P75453</accession>
<proteinExistence type="evidence at protein level"/>
<name>T2RMN_MYCPN</name>